<reference key="1">
    <citation type="journal article" date="2009" name="PLoS Genet.">
        <title>Organised genome dynamics in the Escherichia coli species results in highly diverse adaptive paths.</title>
        <authorList>
            <person name="Touchon M."/>
            <person name="Hoede C."/>
            <person name="Tenaillon O."/>
            <person name="Barbe V."/>
            <person name="Baeriswyl S."/>
            <person name="Bidet P."/>
            <person name="Bingen E."/>
            <person name="Bonacorsi S."/>
            <person name="Bouchier C."/>
            <person name="Bouvet O."/>
            <person name="Calteau A."/>
            <person name="Chiapello H."/>
            <person name="Clermont O."/>
            <person name="Cruveiller S."/>
            <person name="Danchin A."/>
            <person name="Diard M."/>
            <person name="Dossat C."/>
            <person name="Karoui M.E."/>
            <person name="Frapy E."/>
            <person name="Garry L."/>
            <person name="Ghigo J.M."/>
            <person name="Gilles A.M."/>
            <person name="Johnson J."/>
            <person name="Le Bouguenec C."/>
            <person name="Lescat M."/>
            <person name="Mangenot S."/>
            <person name="Martinez-Jehanne V."/>
            <person name="Matic I."/>
            <person name="Nassif X."/>
            <person name="Oztas S."/>
            <person name="Petit M.A."/>
            <person name="Pichon C."/>
            <person name="Rouy Z."/>
            <person name="Ruf C.S."/>
            <person name="Schneider D."/>
            <person name="Tourret J."/>
            <person name="Vacherie B."/>
            <person name="Vallenet D."/>
            <person name="Medigue C."/>
            <person name="Rocha E.P.C."/>
            <person name="Denamur E."/>
        </authorList>
    </citation>
    <scope>NUCLEOTIDE SEQUENCE [LARGE SCALE GENOMIC DNA]</scope>
    <source>
        <strain>ED1a</strain>
    </source>
</reference>
<dbReference type="EC" id="6.3.2.2" evidence="1"/>
<dbReference type="EMBL" id="CU928162">
    <property type="protein sequence ID" value="CAR09159.1"/>
    <property type="molecule type" value="Genomic_DNA"/>
</dbReference>
<dbReference type="RefSeq" id="WP_000611804.1">
    <property type="nucleotide sequence ID" value="NC_011745.1"/>
</dbReference>
<dbReference type="SMR" id="B7MYJ3"/>
<dbReference type="KEGG" id="ecq:ECED1_3142"/>
<dbReference type="HOGENOM" id="CLU_020728_3_0_6"/>
<dbReference type="UniPathway" id="UPA00142">
    <property type="reaction ID" value="UER00209"/>
</dbReference>
<dbReference type="Proteomes" id="UP000000748">
    <property type="component" value="Chromosome"/>
</dbReference>
<dbReference type="GO" id="GO:0005829">
    <property type="term" value="C:cytosol"/>
    <property type="evidence" value="ECO:0007669"/>
    <property type="project" value="TreeGrafter"/>
</dbReference>
<dbReference type="GO" id="GO:0005524">
    <property type="term" value="F:ATP binding"/>
    <property type="evidence" value="ECO:0007669"/>
    <property type="project" value="UniProtKB-KW"/>
</dbReference>
<dbReference type="GO" id="GO:0004357">
    <property type="term" value="F:glutamate-cysteine ligase activity"/>
    <property type="evidence" value="ECO:0007669"/>
    <property type="project" value="UniProtKB-UniRule"/>
</dbReference>
<dbReference type="GO" id="GO:0046872">
    <property type="term" value="F:metal ion binding"/>
    <property type="evidence" value="ECO:0007669"/>
    <property type="project" value="TreeGrafter"/>
</dbReference>
<dbReference type="GO" id="GO:0006750">
    <property type="term" value="P:glutathione biosynthetic process"/>
    <property type="evidence" value="ECO:0007669"/>
    <property type="project" value="UniProtKB-UniRule"/>
</dbReference>
<dbReference type="FunFam" id="3.30.590.20:FF:000001">
    <property type="entry name" value="Glutamate--cysteine ligase"/>
    <property type="match status" value="1"/>
</dbReference>
<dbReference type="Gene3D" id="3.30.590.20">
    <property type="match status" value="1"/>
</dbReference>
<dbReference type="HAMAP" id="MF_00578">
    <property type="entry name" value="Glu_cys_ligase"/>
    <property type="match status" value="1"/>
</dbReference>
<dbReference type="InterPro" id="IPR014746">
    <property type="entry name" value="Gln_synth/guanido_kin_cat_dom"/>
</dbReference>
<dbReference type="InterPro" id="IPR007370">
    <property type="entry name" value="Glu_cys_ligase"/>
</dbReference>
<dbReference type="InterPro" id="IPR006334">
    <property type="entry name" value="Glut_cys_ligase"/>
</dbReference>
<dbReference type="NCBIfam" id="TIGR01434">
    <property type="entry name" value="glu_cys_ligase"/>
    <property type="match status" value="1"/>
</dbReference>
<dbReference type="PANTHER" id="PTHR38761">
    <property type="entry name" value="GLUTAMATE--CYSTEINE LIGASE"/>
    <property type="match status" value="1"/>
</dbReference>
<dbReference type="PANTHER" id="PTHR38761:SF1">
    <property type="entry name" value="GLUTAMATE--CYSTEINE LIGASE"/>
    <property type="match status" value="1"/>
</dbReference>
<dbReference type="Pfam" id="PF04262">
    <property type="entry name" value="Glu_cys_ligase"/>
    <property type="match status" value="1"/>
</dbReference>
<dbReference type="SUPFAM" id="SSF55931">
    <property type="entry name" value="Glutamine synthetase/guanido kinase"/>
    <property type="match status" value="1"/>
</dbReference>
<accession>B7MYJ3</accession>
<sequence length="518" mass="58269">MIPDVSQALAWLEKHPQALKGIQRGLERETLRVNADGTLATTGHPEALGSALTHKWITTDFAEALLEFITPVDGDIEHMLTFMRDLHRYTARNMGDERMWPLSMPCYIAEGQDIELAQYGTSNTGRFKTLYREGLKNRYGALMQTISGVHYNFSLPMAFWQAKCGDISGADAKEKISAGYFRVIRNYYRFGWVIPYLFGASPAICSSFLQGKPTSLPFEKTECGMYYLPYATSLRLSDLGYTNKSQSNLGITFNDLYEYVAGLKQAIKTPSEEYAKIGIEKDGKRLQINSNVLQIENELYAPIRPKRVTRSGESPSDALLRGGIEYIEVRSLDINPFSPIGVDEQQVRFLDLFMVWCALADAPEMSSSELACTRVNWNRVILEGRKPGLTLGIGCETAQFPLPQVGKDLFRDLKRVAQTLDSINGGEAYQKVCDELVACFDNPDLTFSARILRSMIDTGIGGTGKAFAEAYRNLLREEPLEILREEDFVAEREASERRQQEMEAADTEPFAVWLEKHA</sequence>
<feature type="chain" id="PRO_1000146878" description="Glutamate--cysteine ligase">
    <location>
        <begin position="1"/>
        <end position="518"/>
    </location>
</feature>
<proteinExistence type="inferred from homology"/>
<organism>
    <name type="scientific">Escherichia coli O81 (strain ED1a)</name>
    <dbReference type="NCBI Taxonomy" id="585397"/>
    <lineage>
        <taxon>Bacteria</taxon>
        <taxon>Pseudomonadati</taxon>
        <taxon>Pseudomonadota</taxon>
        <taxon>Gammaproteobacteria</taxon>
        <taxon>Enterobacterales</taxon>
        <taxon>Enterobacteriaceae</taxon>
        <taxon>Escherichia</taxon>
    </lineage>
</organism>
<gene>
    <name evidence="1" type="primary">gshA</name>
    <name type="ordered locus">ECED1_3142</name>
</gene>
<name>GSH1_ECO81</name>
<protein>
    <recommendedName>
        <fullName evidence="1">Glutamate--cysteine ligase</fullName>
        <ecNumber evidence="1">6.3.2.2</ecNumber>
    </recommendedName>
    <alternativeName>
        <fullName evidence="1">Gamma-ECS</fullName>
        <shortName evidence="1">GCS</shortName>
    </alternativeName>
    <alternativeName>
        <fullName evidence="1">Gamma-glutamylcysteine synthetase</fullName>
    </alternativeName>
</protein>
<evidence type="ECO:0000255" key="1">
    <source>
        <dbReference type="HAMAP-Rule" id="MF_00578"/>
    </source>
</evidence>
<comment type="catalytic activity">
    <reaction evidence="1">
        <text>L-cysteine + L-glutamate + ATP = gamma-L-glutamyl-L-cysteine + ADP + phosphate + H(+)</text>
        <dbReference type="Rhea" id="RHEA:13285"/>
        <dbReference type="ChEBI" id="CHEBI:15378"/>
        <dbReference type="ChEBI" id="CHEBI:29985"/>
        <dbReference type="ChEBI" id="CHEBI:30616"/>
        <dbReference type="ChEBI" id="CHEBI:35235"/>
        <dbReference type="ChEBI" id="CHEBI:43474"/>
        <dbReference type="ChEBI" id="CHEBI:58173"/>
        <dbReference type="ChEBI" id="CHEBI:456216"/>
        <dbReference type="EC" id="6.3.2.2"/>
    </reaction>
</comment>
<comment type="pathway">
    <text evidence="1">Sulfur metabolism; glutathione biosynthesis; glutathione from L-cysteine and L-glutamate: step 1/2.</text>
</comment>
<comment type="similarity">
    <text evidence="1">Belongs to the glutamate--cysteine ligase type 1 family. Type 1 subfamily.</text>
</comment>
<keyword id="KW-0067">ATP-binding</keyword>
<keyword id="KW-0317">Glutathione biosynthesis</keyword>
<keyword id="KW-0436">Ligase</keyword>
<keyword id="KW-0547">Nucleotide-binding</keyword>